<proteinExistence type="evidence at protein level"/>
<keyword id="KW-0002">3D-structure</keyword>
<keyword id="KW-0007">Acetylation</keyword>
<keyword id="KW-0025">Alternative splicing</keyword>
<keyword id="KW-0963">Cytoplasm</keyword>
<keyword id="KW-0903">Direct protein sequencing</keyword>
<keyword id="KW-0225">Disease variant</keyword>
<keyword id="KW-0343">GTPase activation</keyword>
<keyword id="KW-0597">Phosphoprotein</keyword>
<keyword id="KW-1267">Proteomics identification</keyword>
<keyword id="KW-1185">Reference proteome</keyword>
<keyword id="KW-0677">Repeat</keyword>
<keyword id="KW-0727">SH2 domain</keyword>
<keyword id="KW-0728">SH3 domain</keyword>
<keyword id="KW-0043">Tumor suppressor</keyword>
<accession>P20936</accession>
<accession>B2R6W3</accession>
<accession>B4DTL2</accession>
<accession>Q68CU6</accession>
<accession>Q9UDI1</accession>
<name>RASA1_HUMAN</name>
<evidence type="ECO:0000255" key="1">
    <source>
        <dbReference type="PROSITE-ProRule" id="PRU00041"/>
    </source>
</evidence>
<evidence type="ECO:0000255" key="2">
    <source>
        <dbReference type="PROSITE-ProRule" id="PRU00145"/>
    </source>
</evidence>
<evidence type="ECO:0000255" key="3">
    <source>
        <dbReference type="PROSITE-ProRule" id="PRU00167"/>
    </source>
</evidence>
<evidence type="ECO:0000255" key="4">
    <source>
        <dbReference type="PROSITE-ProRule" id="PRU00191"/>
    </source>
</evidence>
<evidence type="ECO:0000255" key="5">
    <source>
        <dbReference type="PROSITE-ProRule" id="PRU00192"/>
    </source>
</evidence>
<evidence type="ECO:0000269" key="6">
    <source>
    </source>
</evidence>
<evidence type="ECO:0000269" key="7">
    <source>
    </source>
</evidence>
<evidence type="ECO:0000269" key="8">
    <source>
    </source>
</evidence>
<evidence type="ECO:0000269" key="9">
    <source>
    </source>
</evidence>
<evidence type="ECO:0000269" key="10">
    <source>
    </source>
</evidence>
<evidence type="ECO:0000269" key="11">
    <source>
    </source>
</evidence>
<evidence type="ECO:0000269" key="12">
    <source>
    </source>
</evidence>
<evidence type="ECO:0000269" key="13">
    <source>
    </source>
</evidence>
<evidence type="ECO:0000269" key="14">
    <source>
    </source>
</evidence>
<evidence type="ECO:0000269" key="15">
    <source>
    </source>
</evidence>
<evidence type="ECO:0000269" key="16">
    <source>
    </source>
</evidence>
<evidence type="ECO:0000269" key="17">
    <source>
    </source>
</evidence>
<evidence type="ECO:0000269" key="18">
    <source>
    </source>
</evidence>
<evidence type="ECO:0000269" key="19">
    <source>
    </source>
</evidence>
<evidence type="ECO:0000303" key="20">
    <source>
    </source>
</evidence>
<evidence type="ECO:0000303" key="21">
    <source>
    </source>
</evidence>
<evidence type="ECO:0000303" key="22">
    <source>
    </source>
</evidence>
<evidence type="ECO:0000305" key="23"/>
<evidence type="ECO:0007744" key="24">
    <source>
    </source>
</evidence>
<evidence type="ECO:0007744" key="25">
    <source>
    </source>
</evidence>
<evidence type="ECO:0007744" key="26">
    <source>
    </source>
</evidence>
<evidence type="ECO:0007744" key="27">
    <source>
    </source>
</evidence>
<evidence type="ECO:0007829" key="28">
    <source>
        <dbReference type="PDB" id="1WER"/>
    </source>
</evidence>
<evidence type="ECO:0007829" key="29">
    <source>
        <dbReference type="PDB" id="1WQ1"/>
    </source>
</evidence>
<evidence type="ECO:0007829" key="30">
    <source>
        <dbReference type="PDB" id="2GSB"/>
    </source>
</evidence>
<evidence type="ECO:0007829" key="31">
    <source>
        <dbReference type="PDB" id="2J05"/>
    </source>
</evidence>
<evidence type="ECO:0007829" key="32">
    <source>
        <dbReference type="PDB" id="6PXB"/>
    </source>
</evidence>
<evidence type="ECO:0007829" key="33">
    <source>
        <dbReference type="PDB" id="6PXC"/>
    </source>
</evidence>
<evidence type="ECO:0007829" key="34">
    <source>
        <dbReference type="PDB" id="6WAX"/>
    </source>
</evidence>
<comment type="function">
    <text evidence="6 16">Inhibitory regulator of the Ras-cyclic AMP pathway. Stimulates the GTPase of normal but not oncogenic Ras p21; this stimulation may be further increased in the presence of NCK1.</text>
</comment>
<comment type="subunit">
    <text evidence="7 8 10 11 12 13 17 18 19">Interacts with SQSTM1. Interacts with SPSB1; the interaction does not promote degradation. Interacts with CAV2 (tyrosine phosphorylated form). Directly interacts with NCK1. Interacts with PDGFRB (tyrosine phosphorylated). Interacts (via SH2 domain) with the 'Tyr-9' phosphorylated form of PDPK1. Interacts with tyrosine-phosphorylated EPHB4 (PubMed:8955277).</text>
</comment>
<comment type="interaction">
    <interactant intactId="EBI-1026476">
        <id>P20936</id>
    </interactant>
    <interactant intactId="EBI-375446">
        <id>Q8IZP0</id>
        <label>ABI1</label>
    </interactant>
    <organismsDiffer>false</organismsDiffer>
    <experiments>2</experiments>
</comment>
<comment type="interaction">
    <interactant intactId="EBI-1026476">
        <id>P20936</id>
    </interactant>
    <interactant intactId="EBI-608057">
        <id>P10275</id>
        <label>AR</label>
    </interactant>
    <organismsDiffer>false</organismsDiffer>
    <experiments>16</experiments>
</comment>
<comment type="interaction">
    <interactant intactId="EBI-1026476">
        <id>P20936</id>
    </interactant>
    <interactant intactId="EBI-711828">
        <id>P04632</id>
        <label>CAPNS1</label>
    </interactant>
    <organismsDiffer>false</organismsDiffer>
    <experiments>3</experiments>
</comment>
<comment type="interaction">
    <interactant intactId="EBI-1026476">
        <id>P20936</id>
    </interactant>
    <interactant intactId="EBI-603614">
        <id>Q03135</id>
        <label>CAV1</label>
    </interactant>
    <organismsDiffer>false</organismsDiffer>
    <experiments>2</experiments>
</comment>
<comment type="interaction">
    <interactant intactId="EBI-1026476">
        <id>P20936</id>
    </interactant>
    <interactant intactId="EBI-2608428">
        <id>Q96QB1</id>
        <label>DLC1</label>
    </interactant>
    <organismsDiffer>false</organismsDiffer>
    <experiments>7</experiments>
</comment>
<comment type="interaction">
    <interactant intactId="EBI-1026476">
        <id>P20936</id>
    </interactant>
    <interactant intactId="EBI-297353">
        <id>P00533</id>
        <label>EGFR</label>
    </interactant>
    <organismsDiffer>false</organismsDiffer>
    <experiments>7</experiments>
</comment>
<comment type="interaction">
    <interactant intactId="EBI-1026476">
        <id>P20936</id>
    </interactant>
    <interactant intactId="EBI-641062">
        <id>P04626</id>
        <label>ERBB2</label>
    </interactant>
    <organismsDiffer>false</organismsDiffer>
    <experiments>8</experiments>
</comment>
<comment type="interaction">
    <interactant intactId="EBI-1026476">
        <id>P20936</id>
    </interactant>
    <interactant intactId="EBI-720706">
        <id>P21860</id>
        <label>ERBB3</label>
    </interactant>
    <organismsDiffer>false</organismsDiffer>
    <experiments>6</experiments>
</comment>
<comment type="interaction">
    <interactant intactId="EBI-1026476">
        <id>P20936</id>
    </interactant>
    <interactant intactId="EBI-3946257">
        <id>P36888</id>
        <label>FLT3</label>
    </interactant>
    <organismsDiffer>false</organismsDiffer>
    <experiments>2</experiments>
</comment>
<comment type="interaction">
    <interactant intactId="EBI-1026476">
        <id>P20936</id>
    </interactant>
    <interactant intactId="EBI-517684">
        <id>Q13480</id>
        <label>GAB1</label>
    </interactant>
    <organismsDiffer>false</organismsDiffer>
    <experiments>25</experiments>
</comment>
<comment type="interaction">
    <interactant intactId="EBI-1026476">
        <id>P20936</id>
    </interactant>
    <interactant intactId="EBI-2548508">
        <id>Q96IK5</id>
        <label>GMCL1</label>
    </interactant>
    <organismsDiffer>false</organismsDiffer>
    <experiments>3</experiments>
</comment>
<comment type="interaction">
    <interactant intactId="EBI-1026476">
        <id>P20936</id>
    </interactant>
    <interactant intactId="EBI-466029">
        <id>P42858</id>
        <label>HTT</label>
    </interactant>
    <organismsDiffer>false</organismsDiffer>
    <experiments>3</experiments>
</comment>
<comment type="interaction">
    <interactant intactId="EBI-1026476">
        <id>P20936</id>
    </interactant>
    <interactant intactId="EBI-1379503">
        <id>P10721</id>
        <label>KIT</label>
    </interactant>
    <organismsDiffer>false</organismsDiffer>
    <experiments>16</experiments>
</comment>
<comment type="interaction">
    <interactant intactId="EBI-1026476">
        <id>P20936</id>
    </interactant>
    <interactant intactId="EBI-1039152">
        <id>P08581</id>
        <label>MET</label>
    </interactant>
    <organismsDiffer>false</organismsDiffer>
    <experiments>15</experiments>
</comment>
<comment type="interaction">
    <interactant intactId="EBI-1026476">
        <id>P20936</id>
    </interactant>
    <interactant intactId="EBI-389883">
        <id>P16333</id>
        <label>NCK1</label>
    </interactant>
    <organismsDiffer>false</organismsDiffer>
    <experiments>6</experiments>
</comment>
<comment type="interaction">
    <interactant intactId="EBI-1026476">
        <id>P20936</id>
    </interactant>
    <interactant intactId="EBI-641237">
        <id>P09619</id>
        <label>PDGFRB</label>
    </interactant>
    <organismsDiffer>false</organismsDiffer>
    <experiments>3</experiments>
</comment>
<comment type="subcellular location">
    <subcellularLocation>
        <location evidence="16">Cytoplasm</location>
    </subcellularLocation>
</comment>
<comment type="alternative products">
    <event type="alternative splicing"/>
    <isoform>
        <id>P20936-1</id>
        <name>1</name>
        <name>Long</name>
        <sequence type="displayed"/>
    </isoform>
    <isoform>
        <id>P20936-2</id>
        <name>2</name>
        <name>Short</name>
        <sequence type="described" ref="VSP_001625 VSP_001626"/>
    </isoform>
    <isoform>
        <id>P20936-3</id>
        <name>3</name>
        <sequence type="described" ref="VSP_057434 VSP_057435"/>
    </isoform>
    <isoform>
        <id>P20936-4</id>
        <name>4</name>
        <sequence type="described" ref="VSP_057432 VSP_057433"/>
    </isoform>
</comment>
<comment type="tissue specificity">
    <text evidence="16">In placental villi, detected only in the trophoblast layer (cytotrophoblast and syncytiotrophoblast). Not detected in stromal, endothelial or Hofbauer cells (at protein level).</text>
</comment>
<comment type="PTM">
    <text>The N-terminus is blocked.</text>
</comment>
<comment type="PTM">
    <text evidence="6">Phosphorylated by SRC and LCK. The phosphorylation SRC inhibits its ability to stimulate the Ras-GTPase activity, whereas phosphorylation by LCK does not display any effect on stimulation activity.</text>
</comment>
<comment type="disease">
    <text>Mutations in the SH2 domain of RASA seem to be oncogenic and cause basal cell carcinomas.</text>
</comment>
<comment type="disease" evidence="9 14">
    <disease id="DI-01315">
        <name>Capillary malformation-arteriovenous malformation 1</name>
        <acronym>CMAVM1</acronym>
        <description>A disorder characterized by atypical capillary malformations that are multiple, small, round to oval in shape and pinkish red in color. These capillary malformations are associated with either arteriovenous malformation, arteriovenous fistula, or Parkes Weber syndrome. CMAVM1 inheritance is autosomal dominant.</description>
        <dbReference type="MIM" id="608354"/>
    </disease>
    <text>The disease is caused by variants affecting the gene represented in this entry.</text>
</comment>
<sequence>MMAAEAGSEEGGPVTAGAGGGGAAAGSSAYPAVCRVKIPAALPVAAAPYPGLVETGVAGTLGGGAALGSEFLGAGSVAGALGGAGLTGGGTAAGVAGAAAGVAGAAVAGPSGDMALTKLPTSLLAETLGPGGGFPPLPPPPYLPPLGAGLGTVDEGDSLDGPEYEEEEVAIPLTAPPTNQWYHGKLDRTIAEERLRQAGKSGSYLIRESDRRPGSFVLSFLSQMNVVNHFRIIAMCGDYYIGGRRFSSLSDLIGYYSHVSCLLKGEKLLYPVAPPEPVEDRRRVRAILPYTKVPDTDEISFLKGDMFIVHNELEDGWMWVTNLRTDEQGLIVEDLVEEVGREEDPHEGKIWFHGKISKQEAYNLLMTVGQVCSFLVRPSDNTPGDYSLYFRTNENIQRFKICPTPNNQFMMGGRYYNSIGDIIDHYRKEQIVEGYYLKEPVPMQDQEQVLNDTVDGKEIYNTIRRKTKDAFYKNIVKKGYLLKKGKGKRWKNLYFILEGSDAQLIYFESEKRATKPKGLIDLSVCSVYVVHDSLFGRPNCFQIVVQHFSEEHYIFYFAGETPEQAEDWMKGLQAFCNLRKSSPGTSNKRLRQVSSLVLHIEEAHKLPVKHFTNPYCNIYLNSVQVAKTHAREGQNPVWSEEFVFDDLPPDINRFEITLSNKTKKSKDPDILFMRCQLSRLQKGHATDEWFLLSSHIPLKGIEPGSLRVRARYSMEKIMPEEEYSEFKELILQKELHVVYALSHVCGQDRTLLASILLRIFLHEKLESLLLCTLNDREISMEDEATTLFRATTLASTLMEQYMKATATQFVHHALKDSILKIMESKQSCELSPSKLEKNEDVNTNLTHLLNILSELVEKIFMASEILPPTLRYIYGCLQKSVQHKWPTNTTMRTRVVSGFVFLRLICPAILNPRMFNIISDSPSPIAARTLILVAKSVQNLANLVEFGAKEPYMEGVNPFIKSNKHRMIMFLDELGNVPELPDTTEHSRTDLSRDLAALHEICVAHSDELRTLSNERGAQQHVLKKLLAITELLQQKQNQYTKTNDVR</sequence>
<protein>
    <recommendedName>
        <fullName>Ras GTPase-activating protein 1</fullName>
        <shortName>GAP</shortName>
        <shortName>GTPase-activating protein</shortName>
        <shortName>RasGAP</shortName>
    </recommendedName>
    <alternativeName>
        <fullName>Ras p21 protein activator</fullName>
    </alternativeName>
    <alternativeName>
        <fullName>p120GAP</fullName>
    </alternativeName>
</protein>
<gene>
    <name type="primary">RASA1</name>
    <name type="synonym">GAP</name>
    <name type="synonym">RASA</name>
</gene>
<dbReference type="EMBL" id="M23379">
    <property type="protein sequence ID" value="AAA52517.1"/>
    <property type="molecule type" value="mRNA"/>
</dbReference>
<dbReference type="EMBL" id="M23612">
    <property type="protein sequence ID" value="AAA35865.1"/>
    <property type="molecule type" value="mRNA"/>
</dbReference>
<dbReference type="EMBL" id="AK300263">
    <property type="protein sequence ID" value="BAG62024.1"/>
    <property type="molecule type" value="mRNA"/>
</dbReference>
<dbReference type="EMBL" id="AK312739">
    <property type="protein sequence ID" value="BAG35610.1"/>
    <property type="molecule type" value="mRNA"/>
</dbReference>
<dbReference type="EMBL" id="CR749722">
    <property type="protein sequence ID" value="CAH18488.2"/>
    <property type="molecule type" value="mRNA"/>
</dbReference>
<dbReference type="EMBL" id="AC010410">
    <property type="status" value="NOT_ANNOTATED_CDS"/>
    <property type="molecule type" value="Genomic_DNA"/>
</dbReference>
<dbReference type="EMBL" id="AC018754">
    <property type="status" value="NOT_ANNOTATED_CDS"/>
    <property type="molecule type" value="Genomic_DNA"/>
</dbReference>
<dbReference type="EMBL" id="AC035142">
    <property type="status" value="NOT_ANNOTATED_CDS"/>
    <property type="molecule type" value="Genomic_DNA"/>
</dbReference>
<dbReference type="EMBL" id="AC126776">
    <property type="status" value="NOT_ANNOTATED_CDS"/>
    <property type="molecule type" value="Genomic_DNA"/>
</dbReference>
<dbReference type="EMBL" id="BC033015">
    <property type="protein sequence ID" value="AAH33015.1"/>
    <property type="molecule type" value="mRNA"/>
</dbReference>
<dbReference type="CCDS" id="CCDS34200.1">
    <molecule id="P20936-1"/>
</dbReference>
<dbReference type="CCDS" id="CCDS47243.1">
    <molecule id="P20936-2"/>
</dbReference>
<dbReference type="PIR" id="A40121">
    <property type="entry name" value="A40121"/>
</dbReference>
<dbReference type="PIR" id="B40121">
    <property type="entry name" value="B40121"/>
</dbReference>
<dbReference type="RefSeq" id="NP_002881.1">
    <molecule id="P20936-1"/>
    <property type="nucleotide sequence ID" value="NM_002890.3"/>
</dbReference>
<dbReference type="RefSeq" id="NP_072179.1">
    <molecule id="P20936-2"/>
    <property type="nucleotide sequence ID" value="NM_022650.3"/>
</dbReference>
<dbReference type="PDB" id="1WER">
    <property type="method" value="X-ray"/>
    <property type="resolution" value="1.60 A"/>
    <property type="chains" value="A=714-1047"/>
</dbReference>
<dbReference type="PDB" id="1WQ1">
    <property type="method" value="X-ray"/>
    <property type="resolution" value="2.50 A"/>
    <property type="chains" value="G=714-1047"/>
</dbReference>
<dbReference type="PDB" id="2GQI">
    <property type="method" value="NMR"/>
    <property type="chains" value="A=282-339"/>
</dbReference>
<dbReference type="PDB" id="2GSB">
    <property type="method" value="NMR"/>
    <property type="chains" value="A=341-446"/>
</dbReference>
<dbReference type="PDB" id="2J05">
    <property type="method" value="X-ray"/>
    <property type="resolution" value="1.50 A"/>
    <property type="chains" value="A/B=281-341"/>
</dbReference>
<dbReference type="PDB" id="2J06">
    <property type="method" value="X-ray"/>
    <property type="resolution" value="1.80 A"/>
    <property type="chains" value="A/B=281-341"/>
</dbReference>
<dbReference type="PDB" id="2M51">
    <property type="method" value="NMR"/>
    <property type="chains" value="A=281-341"/>
</dbReference>
<dbReference type="PDB" id="4FSS">
    <property type="method" value="X-ray"/>
    <property type="resolution" value="2.25 A"/>
    <property type="chains" value="A/B/C=281-341"/>
</dbReference>
<dbReference type="PDB" id="6PXB">
    <property type="method" value="X-ray"/>
    <property type="resolution" value="1.75 A"/>
    <property type="chains" value="A/B/C/D/E/F=174-280"/>
</dbReference>
<dbReference type="PDB" id="6PXC">
    <property type="method" value="X-ray"/>
    <property type="resolution" value="1.60 A"/>
    <property type="chains" value="A=174-280"/>
</dbReference>
<dbReference type="PDB" id="6WAX">
    <property type="method" value="X-ray"/>
    <property type="resolution" value="1.50 A"/>
    <property type="chains" value="A/B=340-444"/>
</dbReference>
<dbReference type="PDB" id="6WAY">
    <property type="method" value="X-ray"/>
    <property type="resolution" value="1.50 A"/>
    <property type="chains" value="A=340-444"/>
</dbReference>
<dbReference type="PDB" id="8BOS">
    <property type="method" value="X-ray"/>
    <property type="resolution" value="2.10 A"/>
    <property type="chains" value="G=713-1042"/>
</dbReference>
<dbReference type="PDB" id="8DGQ">
    <property type="method" value="X-ray"/>
    <property type="resolution" value="1.95 A"/>
    <property type="chains" value="A/B=174-444"/>
</dbReference>
<dbReference type="PDB" id="9BZ4">
    <property type="method" value="X-ray"/>
    <property type="resolution" value="2.45 A"/>
    <property type="chains" value="A/B/C/D=581-1047"/>
</dbReference>
<dbReference type="PDBsum" id="1WER"/>
<dbReference type="PDBsum" id="1WQ1"/>
<dbReference type="PDBsum" id="2GQI"/>
<dbReference type="PDBsum" id="2GSB"/>
<dbReference type="PDBsum" id="2J05"/>
<dbReference type="PDBsum" id="2J06"/>
<dbReference type="PDBsum" id="2M51"/>
<dbReference type="PDBsum" id="4FSS"/>
<dbReference type="PDBsum" id="6PXB"/>
<dbReference type="PDBsum" id="6PXC"/>
<dbReference type="PDBsum" id="6WAX"/>
<dbReference type="PDBsum" id="6WAY"/>
<dbReference type="PDBsum" id="8BOS"/>
<dbReference type="PDBsum" id="8DGQ"/>
<dbReference type="PDBsum" id="9BZ4"/>
<dbReference type="BMRB" id="P20936"/>
<dbReference type="SASBDB" id="P20936"/>
<dbReference type="SMR" id="P20936"/>
<dbReference type="BioGRID" id="111856">
    <property type="interactions" value="143"/>
</dbReference>
<dbReference type="CORUM" id="P20936"/>
<dbReference type="DIP" id="DIP-144N"/>
<dbReference type="FunCoup" id="P20936">
    <property type="interactions" value="3541"/>
</dbReference>
<dbReference type="IntAct" id="P20936">
    <property type="interactions" value="139"/>
</dbReference>
<dbReference type="MINT" id="P20936"/>
<dbReference type="STRING" id="9606.ENSP00000274376"/>
<dbReference type="GlyGen" id="P20936">
    <property type="glycosylation" value="1 site, 2 N-linked glycans (1 site)"/>
</dbReference>
<dbReference type="iPTMnet" id="P20936"/>
<dbReference type="MetOSite" id="P20936"/>
<dbReference type="PhosphoSitePlus" id="P20936"/>
<dbReference type="SwissPalm" id="P20936"/>
<dbReference type="BioMuta" id="RASA1"/>
<dbReference type="DMDM" id="121743"/>
<dbReference type="CPTAC" id="CPTAC-1548"/>
<dbReference type="jPOST" id="P20936"/>
<dbReference type="MassIVE" id="P20936"/>
<dbReference type="PaxDb" id="9606-ENSP00000274376"/>
<dbReference type="PeptideAtlas" id="P20936"/>
<dbReference type="ProteomicsDB" id="5112"/>
<dbReference type="ProteomicsDB" id="53828">
    <molecule id="P20936-1"/>
</dbReference>
<dbReference type="ProteomicsDB" id="53829">
    <molecule id="P20936-2"/>
</dbReference>
<dbReference type="ProteomicsDB" id="66031"/>
<dbReference type="Pumba" id="P20936"/>
<dbReference type="ABCD" id="P20936">
    <property type="antibodies" value="9 sequenced antibodies"/>
</dbReference>
<dbReference type="Antibodypedia" id="24766">
    <property type="antibodies" value="537 antibodies from 36 providers"/>
</dbReference>
<dbReference type="DNASU" id="5921"/>
<dbReference type="Ensembl" id="ENST00000274376.11">
    <molecule id="P20936-1"/>
    <property type="protein sequence ID" value="ENSP00000274376.6"/>
    <property type="gene ID" value="ENSG00000145715.15"/>
</dbReference>
<dbReference type="Ensembl" id="ENST00000456692.6">
    <molecule id="P20936-2"/>
    <property type="protein sequence ID" value="ENSP00000411221.2"/>
    <property type="gene ID" value="ENSG00000145715.15"/>
</dbReference>
<dbReference type="Ensembl" id="ENST00000512763.5">
    <molecule id="P20936-4"/>
    <property type="protein sequence ID" value="ENSP00000422008.1"/>
    <property type="gene ID" value="ENSG00000145715.15"/>
</dbReference>
<dbReference type="Ensembl" id="ENST00000515800.6">
    <molecule id="P20936-3"/>
    <property type="protein sequence ID" value="ENSP00000423395.2"/>
    <property type="gene ID" value="ENSG00000145715.15"/>
</dbReference>
<dbReference type="GeneID" id="5921"/>
<dbReference type="KEGG" id="hsa:5921"/>
<dbReference type="MANE-Select" id="ENST00000274376.11">
    <property type="protein sequence ID" value="ENSP00000274376.6"/>
    <property type="RefSeq nucleotide sequence ID" value="NM_002890.3"/>
    <property type="RefSeq protein sequence ID" value="NP_002881.1"/>
</dbReference>
<dbReference type="UCSC" id="uc003kiw.4">
    <molecule id="P20936-1"/>
    <property type="organism name" value="human"/>
</dbReference>
<dbReference type="UCSC" id="uc011ctv.3">
    <property type="organism name" value="human"/>
</dbReference>
<dbReference type="UCSC" id="uc063fdq.1">
    <property type="organism name" value="human"/>
</dbReference>
<dbReference type="AGR" id="HGNC:9871"/>
<dbReference type="CTD" id="5921"/>
<dbReference type="DisGeNET" id="5921"/>
<dbReference type="GeneCards" id="RASA1"/>
<dbReference type="GeneReviews" id="RASA1"/>
<dbReference type="HGNC" id="HGNC:9871">
    <property type="gene designation" value="RASA1"/>
</dbReference>
<dbReference type="HPA" id="ENSG00000145715">
    <property type="expression patterns" value="Tissue enhanced (placenta)"/>
</dbReference>
<dbReference type="MalaCards" id="RASA1"/>
<dbReference type="MIM" id="139150">
    <property type="type" value="gene"/>
</dbReference>
<dbReference type="MIM" id="608354">
    <property type="type" value="phenotype"/>
</dbReference>
<dbReference type="neXtProt" id="NX_P20936"/>
<dbReference type="OpenTargets" id="ENSG00000145715"/>
<dbReference type="Orphanet" id="90307">
    <property type="disease" value="Parkes Weber syndrome"/>
</dbReference>
<dbReference type="Orphanet" id="693907">
    <property type="disease" value="RASA1-related capillary malformation-arteriovenous malformation"/>
</dbReference>
<dbReference type="PharmGKB" id="PA34232"/>
<dbReference type="VEuPathDB" id="HostDB:ENSG00000145715"/>
<dbReference type="eggNOG" id="KOG3508">
    <property type="taxonomic scope" value="Eukaryota"/>
</dbReference>
<dbReference type="GeneTree" id="ENSGT00940000155846"/>
<dbReference type="HOGENOM" id="CLU_500517_0_0_1"/>
<dbReference type="InParanoid" id="P20936"/>
<dbReference type="OMA" id="KMGSYLV"/>
<dbReference type="OrthoDB" id="1562946at2759"/>
<dbReference type="PAN-GO" id="P20936">
    <property type="GO annotations" value="0 GO annotations based on evolutionary models"/>
</dbReference>
<dbReference type="PhylomeDB" id="P20936"/>
<dbReference type="TreeFam" id="TF105301"/>
<dbReference type="PathwayCommons" id="P20936"/>
<dbReference type="Reactome" id="R-HSA-186763">
    <property type="pathway name" value="Downstream signal transduction"/>
</dbReference>
<dbReference type="Reactome" id="R-HSA-3928662">
    <property type="pathway name" value="EPHB-mediated forward signaling"/>
</dbReference>
<dbReference type="Reactome" id="R-HSA-5218921">
    <property type="pathway name" value="VEGFR2 mediated cell proliferation"/>
</dbReference>
<dbReference type="Reactome" id="R-HSA-5658442">
    <property type="pathway name" value="Regulation of RAS by GAPs"/>
</dbReference>
<dbReference type="Reactome" id="R-HSA-8849471">
    <property type="pathway name" value="PTK6 Regulates RHO GTPases, RAS GTPase and MAP kinases"/>
</dbReference>
<dbReference type="SignaLink" id="P20936"/>
<dbReference type="SIGNOR" id="P20936"/>
<dbReference type="BioGRID-ORCS" id="5921">
    <property type="hits" value="12 hits in 1168 CRISPR screens"/>
</dbReference>
<dbReference type="ChiTaRS" id="RASA1">
    <property type="organism name" value="human"/>
</dbReference>
<dbReference type="EvolutionaryTrace" id="P20936"/>
<dbReference type="GeneWiki" id="RAS_p21_protein_activator_1"/>
<dbReference type="GenomeRNAi" id="5921"/>
<dbReference type="Pharos" id="P20936">
    <property type="development level" value="Tbio"/>
</dbReference>
<dbReference type="PRO" id="PR:P20936"/>
<dbReference type="Proteomes" id="UP000005640">
    <property type="component" value="Chromosome 5"/>
</dbReference>
<dbReference type="RNAct" id="P20936">
    <property type="molecule type" value="protein"/>
</dbReference>
<dbReference type="Bgee" id="ENSG00000145715">
    <property type="expression patterns" value="Expressed in endothelial cell and 213 other cell types or tissues"/>
</dbReference>
<dbReference type="ExpressionAtlas" id="P20936">
    <property type="expression patterns" value="baseline and differential"/>
</dbReference>
<dbReference type="GO" id="GO:0005737">
    <property type="term" value="C:cytoplasm"/>
    <property type="evidence" value="ECO:0000303"/>
    <property type="project" value="UniProtKB"/>
</dbReference>
<dbReference type="GO" id="GO:0005829">
    <property type="term" value="C:cytosol"/>
    <property type="evidence" value="ECO:0000304"/>
    <property type="project" value="Reactome"/>
</dbReference>
<dbReference type="GO" id="GO:0005886">
    <property type="term" value="C:plasma membrane"/>
    <property type="evidence" value="ECO:0007669"/>
    <property type="project" value="Ensembl"/>
</dbReference>
<dbReference type="GO" id="GO:0001726">
    <property type="term" value="C:ruffle"/>
    <property type="evidence" value="ECO:0007669"/>
    <property type="project" value="Ensembl"/>
</dbReference>
<dbReference type="GO" id="GO:0005096">
    <property type="term" value="F:GTPase activator activity"/>
    <property type="evidence" value="ECO:0000269"/>
    <property type="project" value="Reactome"/>
</dbReference>
<dbReference type="GO" id="GO:0003924">
    <property type="term" value="F:GTPase activity"/>
    <property type="evidence" value="ECO:0000304"/>
    <property type="project" value="Reactome"/>
</dbReference>
<dbReference type="GO" id="GO:0051020">
    <property type="term" value="F:GTPase binding"/>
    <property type="evidence" value="ECO:0000353"/>
    <property type="project" value="UniProtKB"/>
</dbReference>
<dbReference type="GO" id="GO:0001784">
    <property type="term" value="F:phosphotyrosine residue binding"/>
    <property type="evidence" value="ECO:0000353"/>
    <property type="project" value="CAFA"/>
</dbReference>
<dbReference type="GO" id="GO:0019870">
    <property type="term" value="F:potassium channel inhibitor activity"/>
    <property type="evidence" value="ECO:0000303"/>
    <property type="project" value="UniProtKB"/>
</dbReference>
<dbReference type="GO" id="GO:0005102">
    <property type="term" value="F:signaling receptor binding"/>
    <property type="evidence" value="ECO:0000353"/>
    <property type="project" value="UniProtKB"/>
</dbReference>
<dbReference type="GO" id="GO:0048514">
    <property type="term" value="P:blood vessel morphogenesis"/>
    <property type="evidence" value="ECO:0000315"/>
    <property type="project" value="UniProtKB"/>
</dbReference>
<dbReference type="GO" id="GO:0048013">
    <property type="term" value="P:ephrin receptor signaling pathway"/>
    <property type="evidence" value="ECO:0000304"/>
    <property type="project" value="Reactome"/>
</dbReference>
<dbReference type="GO" id="GO:0035556">
    <property type="term" value="P:intracellular signal transduction"/>
    <property type="evidence" value="ECO:0000303"/>
    <property type="project" value="UniProtKB"/>
</dbReference>
<dbReference type="GO" id="GO:0000281">
    <property type="term" value="P:mitotic cytokinesis"/>
    <property type="evidence" value="ECO:0000250"/>
    <property type="project" value="UniProtKB"/>
</dbReference>
<dbReference type="GO" id="GO:0043066">
    <property type="term" value="P:negative regulation of apoptotic process"/>
    <property type="evidence" value="ECO:0000314"/>
    <property type="project" value="UniProtKB"/>
</dbReference>
<dbReference type="GO" id="GO:0007162">
    <property type="term" value="P:negative regulation of cell adhesion"/>
    <property type="evidence" value="ECO:0000314"/>
    <property type="project" value="UniProtKB"/>
</dbReference>
<dbReference type="GO" id="GO:0001953">
    <property type="term" value="P:negative regulation of cell-matrix adhesion"/>
    <property type="evidence" value="ECO:0000314"/>
    <property type="project" value="UniProtKB"/>
</dbReference>
<dbReference type="GO" id="GO:0043524">
    <property type="term" value="P:negative regulation of neuron apoptotic process"/>
    <property type="evidence" value="ECO:0000250"/>
    <property type="project" value="UniProtKB"/>
</dbReference>
<dbReference type="GO" id="GO:0030833">
    <property type="term" value="P:regulation of actin filament polymerization"/>
    <property type="evidence" value="ECO:0000314"/>
    <property type="project" value="UniProtKB"/>
</dbReference>
<dbReference type="GO" id="GO:0008360">
    <property type="term" value="P:regulation of cell shape"/>
    <property type="evidence" value="ECO:0000303"/>
    <property type="project" value="UniProtKB"/>
</dbReference>
<dbReference type="GO" id="GO:0051252">
    <property type="term" value="P:regulation of RNA metabolic process"/>
    <property type="evidence" value="ECO:0000303"/>
    <property type="project" value="UniProtKB"/>
</dbReference>
<dbReference type="GO" id="GO:0007165">
    <property type="term" value="P:signal transduction"/>
    <property type="evidence" value="ECO:0000314"/>
    <property type="project" value="UniProtKB"/>
</dbReference>
<dbReference type="GO" id="GO:0001570">
    <property type="term" value="P:vasculogenesis"/>
    <property type="evidence" value="ECO:0000250"/>
    <property type="project" value="UniProtKB"/>
</dbReference>
<dbReference type="CDD" id="cd08400">
    <property type="entry name" value="C2_Ras_p21A1"/>
    <property type="match status" value="1"/>
</dbReference>
<dbReference type="CDD" id="cd13260">
    <property type="entry name" value="PH_RASA1"/>
    <property type="match status" value="1"/>
</dbReference>
<dbReference type="CDD" id="cd05391">
    <property type="entry name" value="RasGAP_p120GAP"/>
    <property type="match status" value="1"/>
</dbReference>
<dbReference type="CDD" id="cd10354">
    <property type="entry name" value="SH2_Cterm_RasGAP"/>
    <property type="match status" value="1"/>
</dbReference>
<dbReference type="CDD" id="cd10353">
    <property type="entry name" value="SH2_Nterm_RasGAP"/>
    <property type="match status" value="1"/>
</dbReference>
<dbReference type="CDD" id="cd11788">
    <property type="entry name" value="SH3_RasGAP"/>
    <property type="match status" value="1"/>
</dbReference>
<dbReference type="FunFam" id="1.10.506.10:FF:000007">
    <property type="entry name" value="RAS p21 protein activator 1"/>
    <property type="match status" value="1"/>
</dbReference>
<dbReference type="FunFam" id="2.30.29.30:FF:000090">
    <property type="entry name" value="RAS p21 protein activator 1"/>
    <property type="match status" value="1"/>
</dbReference>
<dbReference type="FunFam" id="2.30.30.40:FF:000050">
    <property type="entry name" value="RAS p21 protein activator 1"/>
    <property type="match status" value="1"/>
</dbReference>
<dbReference type="FunFam" id="2.60.40.150:FF:000052">
    <property type="entry name" value="RAS p21 protein activator 1"/>
    <property type="match status" value="1"/>
</dbReference>
<dbReference type="FunFam" id="3.30.505.10:FF:000033">
    <property type="entry name" value="RAS p21 protein activator 1"/>
    <property type="match status" value="1"/>
</dbReference>
<dbReference type="FunFam" id="3.30.505.10:FF:000046">
    <property type="entry name" value="RAS p21 protein activator 1"/>
    <property type="match status" value="1"/>
</dbReference>
<dbReference type="Gene3D" id="2.60.40.150">
    <property type="entry name" value="C2 domain"/>
    <property type="match status" value="1"/>
</dbReference>
<dbReference type="Gene3D" id="1.10.506.10">
    <property type="entry name" value="GTPase Activation - p120gap, domain 1"/>
    <property type="match status" value="2"/>
</dbReference>
<dbReference type="Gene3D" id="2.30.29.30">
    <property type="entry name" value="Pleckstrin-homology domain (PH domain)/Phosphotyrosine-binding domain (PTB)"/>
    <property type="match status" value="1"/>
</dbReference>
<dbReference type="Gene3D" id="3.30.505.10">
    <property type="entry name" value="SH2 domain"/>
    <property type="match status" value="2"/>
</dbReference>
<dbReference type="Gene3D" id="2.30.30.40">
    <property type="entry name" value="SH3 Domains"/>
    <property type="match status" value="1"/>
</dbReference>
<dbReference type="InterPro" id="IPR000008">
    <property type="entry name" value="C2_dom"/>
</dbReference>
<dbReference type="InterPro" id="IPR035892">
    <property type="entry name" value="C2_domain_sf"/>
</dbReference>
<dbReference type="InterPro" id="IPR011993">
    <property type="entry name" value="PH-like_dom_sf"/>
</dbReference>
<dbReference type="InterPro" id="IPR001849">
    <property type="entry name" value="PH_domain"/>
</dbReference>
<dbReference type="InterPro" id="IPR039360">
    <property type="entry name" value="Ras_GTPase"/>
</dbReference>
<dbReference type="InterPro" id="IPR035842">
    <property type="entry name" value="RasGAP_C_SH2"/>
</dbReference>
<dbReference type="InterPro" id="IPR023152">
    <property type="entry name" value="RasGAP_CS"/>
</dbReference>
<dbReference type="InterPro" id="IPR001936">
    <property type="entry name" value="RasGAP_dom"/>
</dbReference>
<dbReference type="InterPro" id="IPR035841">
    <property type="entry name" value="RasGAP_N_SH2"/>
</dbReference>
<dbReference type="InterPro" id="IPR035652">
    <property type="entry name" value="RasGAP_SH3"/>
</dbReference>
<dbReference type="InterPro" id="IPR008936">
    <property type="entry name" value="Rho_GTPase_activation_prot"/>
</dbReference>
<dbReference type="InterPro" id="IPR000980">
    <property type="entry name" value="SH2"/>
</dbReference>
<dbReference type="InterPro" id="IPR036860">
    <property type="entry name" value="SH2_dom_sf"/>
</dbReference>
<dbReference type="InterPro" id="IPR036028">
    <property type="entry name" value="SH3-like_dom_sf"/>
</dbReference>
<dbReference type="InterPro" id="IPR001452">
    <property type="entry name" value="SH3_domain"/>
</dbReference>
<dbReference type="PANTHER" id="PTHR10194:SF146">
    <property type="entry name" value="RAS GTPASE-ACTIVATING PROTEIN 1"/>
    <property type="match status" value="1"/>
</dbReference>
<dbReference type="PANTHER" id="PTHR10194">
    <property type="entry name" value="RAS GTPASE-ACTIVATING PROTEINS"/>
    <property type="match status" value="1"/>
</dbReference>
<dbReference type="Pfam" id="PF00168">
    <property type="entry name" value="C2"/>
    <property type="match status" value="1"/>
</dbReference>
<dbReference type="Pfam" id="PF00169">
    <property type="entry name" value="PH"/>
    <property type="match status" value="1"/>
</dbReference>
<dbReference type="Pfam" id="PF00616">
    <property type="entry name" value="RasGAP"/>
    <property type="match status" value="1"/>
</dbReference>
<dbReference type="Pfam" id="PF00017">
    <property type="entry name" value="SH2"/>
    <property type="match status" value="2"/>
</dbReference>
<dbReference type="Pfam" id="PF00018">
    <property type="entry name" value="SH3_1"/>
    <property type="match status" value="1"/>
</dbReference>
<dbReference type="PRINTS" id="PR00401">
    <property type="entry name" value="SH2DOMAIN"/>
</dbReference>
<dbReference type="SMART" id="SM00239">
    <property type="entry name" value="C2"/>
    <property type="match status" value="1"/>
</dbReference>
<dbReference type="SMART" id="SM00233">
    <property type="entry name" value="PH"/>
    <property type="match status" value="1"/>
</dbReference>
<dbReference type="SMART" id="SM00323">
    <property type="entry name" value="RasGAP"/>
    <property type="match status" value="1"/>
</dbReference>
<dbReference type="SMART" id="SM00252">
    <property type="entry name" value="SH2"/>
    <property type="match status" value="2"/>
</dbReference>
<dbReference type="SMART" id="SM00326">
    <property type="entry name" value="SH3"/>
    <property type="match status" value="1"/>
</dbReference>
<dbReference type="SUPFAM" id="SSF49562">
    <property type="entry name" value="C2 domain (Calcium/lipid-binding domain, CaLB)"/>
    <property type="match status" value="1"/>
</dbReference>
<dbReference type="SUPFAM" id="SSF48350">
    <property type="entry name" value="GTPase activation domain, GAP"/>
    <property type="match status" value="1"/>
</dbReference>
<dbReference type="SUPFAM" id="SSF50729">
    <property type="entry name" value="PH domain-like"/>
    <property type="match status" value="1"/>
</dbReference>
<dbReference type="SUPFAM" id="SSF55550">
    <property type="entry name" value="SH2 domain"/>
    <property type="match status" value="2"/>
</dbReference>
<dbReference type="SUPFAM" id="SSF50044">
    <property type="entry name" value="SH3-domain"/>
    <property type="match status" value="1"/>
</dbReference>
<dbReference type="PROSITE" id="PS50004">
    <property type="entry name" value="C2"/>
    <property type="match status" value="1"/>
</dbReference>
<dbReference type="PROSITE" id="PS50003">
    <property type="entry name" value="PH_DOMAIN"/>
    <property type="match status" value="1"/>
</dbReference>
<dbReference type="PROSITE" id="PS00509">
    <property type="entry name" value="RAS_GTPASE_ACTIV_1"/>
    <property type="match status" value="1"/>
</dbReference>
<dbReference type="PROSITE" id="PS50018">
    <property type="entry name" value="RAS_GTPASE_ACTIV_2"/>
    <property type="match status" value="1"/>
</dbReference>
<dbReference type="PROSITE" id="PS50001">
    <property type="entry name" value="SH2"/>
    <property type="match status" value="2"/>
</dbReference>
<dbReference type="PROSITE" id="PS50002">
    <property type="entry name" value="SH3"/>
    <property type="match status" value="1"/>
</dbReference>
<organism>
    <name type="scientific">Homo sapiens</name>
    <name type="common">Human</name>
    <dbReference type="NCBI Taxonomy" id="9606"/>
    <lineage>
        <taxon>Eukaryota</taxon>
        <taxon>Metazoa</taxon>
        <taxon>Chordata</taxon>
        <taxon>Craniata</taxon>
        <taxon>Vertebrata</taxon>
        <taxon>Euteleostomi</taxon>
        <taxon>Mammalia</taxon>
        <taxon>Eutheria</taxon>
        <taxon>Euarchontoglires</taxon>
        <taxon>Primates</taxon>
        <taxon>Haplorrhini</taxon>
        <taxon>Catarrhini</taxon>
        <taxon>Hominidae</taxon>
        <taxon>Homo</taxon>
    </lineage>
</organism>
<feature type="chain" id="PRO_0000056636" description="Ras GTPase-activating protein 1">
    <location>
        <begin position="1"/>
        <end position="1047"/>
    </location>
</feature>
<feature type="domain" description="SH2 1" evidence="4">
    <location>
        <begin position="181"/>
        <end position="272"/>
    </location>
</feature>
<feature type="domain" description="SH3" evidence="5">
    <location>
        <begin position="279"/>
        <end position="341"/>
    </location>
</feature>
<feature type="domain" description="SH2 2" evidence="4">
    <location>
        <begin position="351"/>
        <end position="441"/>
    </location>
</feature>
<feature type="domain" description="PH" evidence="2">
    <location>
        <begin position="474"/>
        <end position="577"/>
    </location>
</feature>
<feature type="domain" description="C2" evidence="1">
    <location>
        <begin position="577"/>
        <end position="690"/>
    </location>
</feature>
<feature type="domain" description="Ras-GAP" evidence="3">
    <location>
        <begin position="764"/>
        <end position="974"/>
    </location>
</feature>
<feature type="site" description="Arginine finger; crucial for GTP hydrolysis by stabilizing the transition state" evidence="3">
    <location>
        <position position="789"/>
    </location>
</feature>
<feature type="modified residue" description="N-acetylmethionine" evidence="25 26">
    <location>
        <position position="1"/>
    </location>
</feature>
<feature type="modified residue" description="Phosphotyrosine" evidence="24">
    <location>
        <position position="615"/>
    </location>
</feature>
<feature type="modified residue" description="Phosphoserine" evidence="27">
    <location>
        <position position="831"/>
    </location>
</feature>
<feature type="splice variant" id="VSP_001625" description="In isoform 2." evidence="20 22">
    <location>
        <begin position="1"/>
        <end position="177"/>
    </location>
</feature>
<feature type="splice variant" id="VSP_057432" description="In isoform 4." evidence="20">
    <original>MMAAEAGSEEGGP</original>
    <variation>MRTGYSSVPSKLR</variation>
    <location>
        <begin position="1"/>
        <end position="13"/>
    </location>
</feature>
<feature type="splice variant" id="VSP_057433" description="In isoform 4." evidence="20">
    <location>
        <begin position="14"/>
        <end position="180"/>
    </location>
</feature>
<feature type="splice variant" id="VSP_001626" description="In isoform 2." evidence="20 22">
    <original>TNQ</original>
    <variation>MKG</variation>
    <location>
        <begin position="178"/>
        <end position="180"/>
    </location>
</feature>
<feature type="splice variant" id="VSP_057434" description="In isoform 3." evidence="21">
    <original>PN</original>
    <variation>CS</variation>
    <location>
        <begin position="538"/>
        <end position="539"/>
    </location>
</feature>
<feature type="splice variant" id="VSP_057435" description="In isoform 3." evidence="21">
    <location>
        <begin position="540"/>
        <end position="1047"/>
    </location>
</feature>
<feature type="sequence variant" id="VAR_002650" description="In basal cell carcinomas; dbSNP:rs137853214." evidence="15">
    <original>R</original>
    <variation>L</variation>
    <location>
        <position position="398"/>
    </location>
</feature>
<feature type="sequence variant" id="VAR_002651" description="In basal cell carcinomas; dbSNP:rs137853215." evidence="15">
    <original>K</original>
    <variation>E</variation>
    <location>
        <position position="400"/>
    </location>
</feature>
<feature type="sequence variant" id="VAR_002652" description="In basal cell carcinomas; dbSNP:rs137853216." evidence="15">
    <original>I</original>
    <variation>V</variation>
    <location>
        <position position="401"/>
    </location>
</feature>
<feature type="sequence variant" id="VAR_072088" description="In CMAVM1; uncertain significance; dbSNP:rs145752649." evidence="14">
    <original>Y</original>
    <variation>C</variation>
    <location>
        <position position="528"/>
    </location>
</feature>
<feature type="sequence variant" id="VAR_072089" description="In CMAVM1." evidence="14">
    <original>V</original>
    <variation>D</variation>
    <location>
        <position position="530"/>
    </location>
</feature>
<feature type="sequence variant" id="VAR_017744" description="In CMAVM1; dbSNP:rs137853217." evidence="9">
    <original>C</original>
    <variation>Y</variation>
    <location>
        <position position="540"/>
    </location>
</feature>
<feature type="sequence variant" id="VAR_072090" description="In CMAVM1; dbSNP:rs745690594." evidence="14">
    <original>A</original>
    <variation>E</variation>
    <location>
        <position position="626"/>
    </location>
</feature>
<feature type="sequence variant" id="VAR_072091" description="In CMAVM1; uncertain significance; dbSNP:rs373098580." evidence="14">
    <original>E</original>
    <variation>V</variation>
    <location>
        <position position="763"/>
    </location>
</feature>
<feature type="sequence conflict" description="In Ref. 6; AA sequence." evidence="23" ref="6">
    <original>R</original>
    <variation>A</variation>
    <location>
        <position position="789"/>
    </location>
</feature>
<feature type="helix" evidence="33">
    <location>
        <begin position="178"/>
        <end position="180"/>
    </location>
</feature>
<feature type="strand" evidence="33">
    <location>
        <begin position="182"/>
        <end position="186"/>
    </location>
</feature>
<feature type="helix" evidence="33">
    <location>
        <begin position="188"/>
        <end position="198"/>
    </location>
</feature>
<feature type="strand" evidence="33">
    <location>
        <begin position="203"/>
        <end position="212"/>
    </location>
</feature>
<feature type="strand" evidence="33">
    <location>
        <begin position="216"/>
        <end position="221"/>
    </location>
</feature>
<feature type="helix" evidence="32">
    <location>
        <begin position="223"/>
        <end position="225"/>
    </location>
</feature>
<feature type="strand" evidence="33">
    <location>
        <begin position="227"/>
        <end position="235"/>
    </location>
</feature>
<feature type="strand" evidence="33">
    <location>
        <begin position="238"/>
        <end position="241"/>
    </location>
</feature>
<feature type="strand" evidence="33">
    <location>
        <begin position="244"/>
        <end position="248"/>
    </location>
</feature>
<feature type="helix" evidence="33">
    <location>
        <begin position="249"/>
        <end position="258"/>
    </location>
</feature>
<feature type="strand" evidence="31">
    <location>
        <begin position="283"/>
        <end position="288"/>
    </location>
</feature>
<feature type="strand" evidence="31">
    <location>
        <begin position="296"/>
        <end position="298"/>
    </location>
</feature>
<feature type="strand" evidence="31">
    <location>
        <begin position="306"/>
        <end position="312"/>
    </location>
</feature>
<feature type="strand" evidence="31">
    <location>
        <begin position="316"/>
        <end position="322"/>
    </location>
</feature>
<feature type="turn" evidence="31">
    <location>
        <begin position="323"/>
        <end position="325"/>
    </location>
</feature>
<feature type="strand" evidence="31">
    <location>
        <begin position="328"/>
        <end position="332"/>
    </location>
</feature>
<feature type="helix" evidence="31">
    <location>
        <begin position="333"/>
        <end position="335"/>
    </location>
</feature>
<feature type="strand" evidence="31">
    <location>
        <begin position="336"/>
        <end position="338"/>
    </location>
</feature>
<feature type="turn" evidence="34">
    <location>
        <begin position="345"/>
        <end position="348"/>
    </location>
</feature>
<feature type="strand" evidence="30">
    <location>
        <begin position="350"/>
        <end position="352"/>
    </location>
</feature>
<feature type="helix" evidence="34">
    <location>
        <begin position="358"/>
        <end position="367"/>
    </location>
</feature>
<feature type="strand" evidence="34">
    <location>
        <begin position="374"/>
        <end position="378"/>
    </location>
</feature>
<feature type="strand" evidence="34">
    <location>
        <begin position="380"/>
        <end position="382"/>
    </location>
</feature>
<feature type="strand" evidence="34">
    <location>
        <begin position="386"/>
        <end position="391"/>
    </location>
</feature>
<feature type="strand" evidence="34">
    <location>
        <begin position="396"/>
        <end position="403"/>
    </location>
</feature>
<feature type="turn" evidence="30">
    <location>
        <begin position="405"/>
        <end position="407"/>
    </location>
</feature>
<feature type="strand" evidence="34">
    <location>
        <begin position="409"/>
        <end position="411"/>
    </location>
</feature>
<feature type="strand" evidence="34">
    <location>
        <begin position="414"/>
        <end position="417"/>
    </location>
</feature>
<feature type="helix" evidence="34">
    <location>
        <begin position="419"/>
        <end position="428"/>
    </location>
</feature>
<feature type="helix" evidence="28">
    <location>
        <begin position="720"/>
        <end position="723"/>
    </location>
</feature>
<feature type="helix" evidence="28">
    <location>
        <begin position="724"/>
        <end position="730"/>
    </location>
</feature>
<feature type="helix" evidence="28">
    <location>
        <begin position="736"/>
        <end position="744"/>
    </location>
</feature>
<feature type="strand" evidence="29">
    <location>
        <begin position="746"/>
        <end position="748"/>
    </location>
</feature>
<feature type="helix" evidence="28">
    <location>
        <begin position="749"/>
        <end position="762"/>
    </location>
</feature>
<feature type="helix" evidence="28">
    <location>
        <begin position="766"/>
        <end position="780"/>
    </location>
</feature>
<feature type="helix" evidence="28">
    <location>
        <begin position="784"/>
        <end position="786"/>
    </location>
</feature>
<feature type="turn" evidence="29">
    <location>
        <begin position="787"/>
        <end position="789"/>
    </location>
</feature>
<feature type="helix" evidence="28">
    <location>
        <begin position="793"/>
        <end position="805"/>
    </location>
</feature>
<feature type="helix" evidence="28">
    <location>
        <begin position="807"/>
        <end position="823"/>
    </location>
</feature>
<feature type="helix" evidence="28">
    <location>
        <begin position="832"/>
        <end position="834"/>
    </location>
</feature>
<feature type="helix" evidence="28">
    <location>
        <begin position="841"/>
        <end position="860"/>
    </location>
</feature>
<feature type="helix" evidence="28">
    <location>
        <begin position="861"/>
        <end position="865"/>
    </location>
</feature>
<feature type="helix" evidence="28">
    <location>
        <begin position="868"/>
        <end position="884"/>
    </location>
</feature>
<feature type="helix" evidence="28">
    <location>
        <begin position="891"/>
        <end position="900"/>
    </location>
</feature>
<feature type="turn" evidence="28">
    <location>
        <begin position="901"/>
        <end position="904"/>
    </location>
</feature>
<feature type="helix" evidence="28">
    <location>
        <begin position="905"/>
        <end position="910"/>
    </location>
</feature>
<feature type="turn" evidence="28">
    <location>
        <begin position="912"/>
        <end position="916"/>
    </location>
</feature>
<feature type="helix" evidence="28">
    <location>
        <begin position="924"/>
        <end position="941"/>
    </location>
</feature>
<feature type="strand" evidence="29">
    <location>
        <begin position="946"/>
        <end position="949"/>
    </location>
</feature>
<feature type="helix" evidence="28">
    <location>
        <begin position="951"/>
        <end position="956"/>
    </location>
</feature>
<feature type="helix" evidence="28">
    <location>
        <begin position="957"/>
        <end position="974"/>
    </location>
</feature>
<feature type="helix" evidence="28">
    <location>
        <begin position="992"/>
        <end position="1004"/>
    </location>
</feature>
<feature type="helix" evidence="28">
    <location>
        <begin position="1006"/>
        <end position="1013"/>
    </location>
</feature>
<feature type="helix" evidence="28">
    <location>
        <begin position="1020"/>
        <end position="1038"/>
    </location>
</feature>
<reference key="1">
    <citation type="journal article" date="1988" name="Science">
        <title>Molecular cloning of two types of GAP complementary DNA from human placenta.</title>
        <authorList>
            <person name="Trahey M."/>
            <person name="Wong G."/>
            <person name="Halenbeck R."/>
            <person name="Rubinfeld B."/>
            <person name="Martin G.A."/>
            <person name="Ladner M."/>
            <person name="Long C.M."/>
            <person name="Crosier W.J."/>
            <person name="Watt K."/>
            <person name="Koths K."/>
            <person name="McCormick F."/>
        </authorList>
    </citation>
    <scope>NUCLEOTIDE SEQUENCE [MRNA] (ISOFORMS 1 AND 2)</scope>
    <source>
        <tissue>Placenta</tissue>
    </source>
</reference>
<reference key="2">
    <citation type="journal article" date="2004" name="Nat. Genet.">
        <title>Complete sequencing and characterization of 21,243 full-length human cDNAs.</title>
        <authorList>
            <person name="Ota T."/>
            <person name="Suzuki Y."/>
            <person name="Nishikawa T."/>
            <person name="Otsuki T."/>
            <person name="Sugiyama T."/>
            <person name="Irie R."/>
            <person name="Wakamatsu A."/>
            <person name="Hayashi K."/>
            <person name="Sato H."/>
            <person name="Nagai K."/>
            <person name="Kimura K."/>
            <person name="Makita H."/>
            <person name="Sekine M."/>
            <person name="Obayashi M."/>
            <person name="Nishi T."/>
            <person name="Shibahara T."/>
            <person name="Tanaka T."/>
            <person name="Ishii S."/>
            <person name="Yamamoto J."/>
            <person name="Saito K."/>
            <person name="Kawai Y."/>
            <person name="Isono Y."/>
            <person name="Nakamura Y."/>
            <person name="Nagahari K."/>
            <person name="Murakami K."/>
            <person name="Yasuda T."/>
            <person name="Iwayanagi T."/>
            <person name="Wagatsuma M."/>
            <person name="Shiratori A."/>
            <person name="Sudo H."/>
            <person name="Hosoiri T."/>
            <person name="Kaku Y."/>
            <person name="Kodaira H."/>
            <person name="Kondo H."/>
            <person name="Sugawara M."/>
            <person name="Takahashi M."/>
            <person name="Kanda K."/>
            <person name="Yokoi T."/>
            <person name="Furuya T."/>
            <person name="Kikkawa E."/>
            <person name="Omura Y."/>
            <person name="Abe K."/>
            <person name="Kamihara K."/>
            <person name="Katsuta N."/>
            <person name="Sato K."/>
            <person name="Tanikawa M."/>
            <person name="Yamazaki M."/>
            <person name="Ninomiya K."/>
            <person name="Ishibashi T."/>
            <person name="Yamashita H."/>
            <person name="Murakawa K."/>
            <person name="Fujimori K."/>
            <person name="Tanai H."/>
            <person name="Kimata M."/>
            <person name="Watanabe M."/>
            <person name="Hiraoka S."/>
            <person name="Chiba Y."/>
            <person name="Ishida S."/>
            <person name="Ono Y."/>
            <person name="Takiguchi S."/>
            <person name="Watanabe S."/>
            <person name="Yosida M."/>
            <person name="Hotuta T."/>
            <person name="Kusano J."/>
            <person name="Kanehori K."/>
            <person name="Takahashi-Fujii A."/>
            <person name="Hara H."/>
            <person name="Tanase T.-O."/>
            <person name="Nomura Y."/>
            <person name="Togiya S."/>
            <person name="Komai F."/>
            <person name="Hara R."/>
            <person name="Takeuchi K."/>
            <person name="Arita M."/>
            <person name="Imose N."/>
            <person name="Musashino K."/>
            <person name="Yuuki H."/>
            <person name="Oshima A."/>
            <person name="Sasaki N."/>
            <person name="Aotsuka S."/>
            <person name="Yoshikawa Y."/>
            <person name="Matsunawa H."/>
            <person name="Ichihara T."/>
            <person name="Shiohata N."/>
            <person name="Sano S."/>
            <person name="Moriya S."/>
            <person name="Momiyama H."/>
            <person name="Satoh N."/>
            <person name="Takami S."/>
            <person name="Terashima Y."/>
            <person name="Suzuki O."/>
            <person name="Nakagawa S."/>
            <person name="Senoh A."/>
            <person name="Mizoguchi H."/>
            <person name="Goto Y."/>
            <person name="Shimizu F."/>
            <person name="Wakebe H."/>
            <person name="Hishigaki H."/>
            <person name="Watanabe T."/>
            <person name="Sugiyama A."/>
            <person name="Takemoto M."/>
            <person name="Kawakami B."/>
            <person name="Yamazaki M."/>
            <person name="Watanabe K."/>
            <person name="Kumagai A."/>
            <person name="Itakura S."/>
            <person name="Fukuzumi Y."/>
            <person name="Fujimori Y."/>
            <person name="Komiyama M."/>
            <person name="Tashiro H."/>
            <person name="Tanigami A."/>
            <person name="Fujiwara T."/>
            <person name="Ono T."/>
            <person name="Yamada K."/>
            <person name="Fujii Y."/>
            <person name="Ozaki K."/>
            <person name="Hirao M."/>
            <person name="Ohmori Y."/>
            <person name="Kawabata A."/>
            <person name="Hikiji T."/>
            <person name="Kobatake N."/>
            <person name="Inagaki H."/>
            <person name="Ikema Y."/>
            <person name="Okamoto S."/>
            <person name="Okitani R."/>
            <person name="Kawakami T."/>
            <person name="Noguchi S."/>
            <person name="Itoh T."/>
            <person name="Shigeta K."/>
            <person name="Senba T."/>
            <person name="Matsumura K."/>
            <person name="Nakajima Y."/>
            <person name="Mizuno T."/>
            <person name="Morinaga M."/>
            <person name="Sasaki M."/>
            <person name="Togashi T."/>
            <person name="Oyama M."/>
            <person name="Hata H."/>
            <person name="Watanabe M."/>
            <person name="Komatsu T."/>
            <person name="Mizushima-Sugano J."/>
            <person name="Satoh T."/>
            <person name="Shirai Y."/>
            <person name="Takahashi Y."/>
            <person name="Nakagawa K."/>
            <person name="Okumura K."/>
            <person name="Nagase T."/>
            <person name="Nomura N."/>
            <person name="Kikuchi H."/>
            <person name="Masuho Y."/>
            <person name="Yamashita R."/>
            <person name="Nakai K."/>
            <person name="Yada T."/>
            <person name="Nakamura Y."/>
            <person name="Ohara O."/>
            <person name="Isogai T."/>
            <person name="Sugano S."/>
        </authorList>
    </citation>
    <scope>NUCLEOTIDE SEQUENCE [LARGE SCALE MRNA] (ISOFORMS 2 AND 4)</scope>
    <source>
        <tissue>Placenta</tissue>
    </source>
</reference>
<reference key="3">
    <citation type="journal article" date="2007" name="BMC Genomics">
        <title>The full-ORF clone resource of the German cDNA consortium.</title>
        <authorList>
            <person name="Bechtel S."/>
            <person name="Rosenfelder H."/>
            <person name="Duda A."/>
            <person name="Schmidt C.P."/>
            <person name="Ernst U."/>
            <person name="Wellenreuther R."/>
            <person name="Mehrle A."/>
            <person name="Schuster C."/>
            <person name="Bahr A."/>
            <person name="Bloecker H."/>
            <person name="Heubner D."/>
            <person name="Hoerlein A."/>
            <person name="Michel G."/>
            <person name="Wedler H."/>
            <person name="Koehrer K."/>
            <person name="Ottenwaelder B."/>
            <person name="Poustka A."/>
            <person name="Wiemann S."/>
            <person name="Schupp I."/>
        </authorList>
    </citation>
    <scope>NUCLEOTIDE SEQUENCE [LARGE SCALE MRNA] (ISOFORM 3)</scope>
    <source>
        <tissue>Testis</tissue>
    </source>
</reference>
<reference key="4">
    <citation type="journal article" date="2004" name="Nature">
        <title>The DNA sequence and comparative analysis of human chromosome 5.</title>
        <authorList>
            <person name="Schmutz J."/>
            <person name="Martin J."/>
            <person name="Terry A."/>
            <person name="Couronne O."/>
            <person name="Grimwood J."/>
            <person name="Lowry S."/>
            <person name="Gordon L.A."/>
            <person name="Scott D."/>
            <person name="Xie G."/>
            <person name="Huang W."/>
            <person name="Hellsten U."/>
            <person name="Tran-Gyamfi M."/>
            <person name="She X."/>
            <person name="Prabhakar S."/>
            <person name="Aerts A."/>
            <person name="Altherr M."/>
            <person name="Bajorek E."/>
            <person name="Black S."/>
            <person name="Branscomb E."/>
            <person name="Caoile C."/>
            <person name="Challacombe J.F."/>
            <person name="Chan Y.M."/>
            <person name="Denys M."/>
            <person name="Detter J.C."/>
            <person name="Escobar J."/>
            <person name="Flowers D."/>
            <person name="Fotopulos D."/>
            <person name="Glavina T."/>
            <person name="Gomez M."/>
            <person name="Gonzales E."/>
            <person name="Goodstein D."/>
            <person name="Grigoriev I."/>
            <person name="Groza M."/>
            <person name="Hammon N."/>
            <person name="Hawkins T."/>
            <person name="Haydu L."/>
            <person name="Israni S."/>
            <person name="Jett J."/>
            <person name="Kadner K."/>
            <person name="Kimball H."/>
            <person name="Kobayashi A."/>
            <person name="Lopez F."/>
            <person name="Lou Y."/>
            <person name="Martinez D."/>
            <person name="Medina C."/>
            <person name="Morgan J."/>
            <person name="Nandkeshwar R."/>
            <person name="Noonan J.P."/>
            <person name="Pitluck S."/>
            <person name="Pollard M."/>
            <person name="Predki P."/>
            <person name="Priest J."/>
            <person name="Ramirez L."/>
            <person name="Retterer J."/>
            <person name="Rodriguez A."/>
            <person name="Rogers S."/>
            <person name="Salamov A."/>
            <person name="Salazar A."/>
            <person name="Thayer N."/>
            <person name="Tice H."/>
            <person name="Tsai M."/>
            <person name="Ustaszewska A."/>
            <person name="Vo N."/>
            <person name="Wheeler J."/>
            <person name="Wu K."/>
            <person name="Yang J."/>
            <person name="Dickson M."/>
            <person name="Cheng J.-F."/>
            <person name="Eichler E.E."/>
            <person name="Olsen A."/>
            <person name="Pennacchio L.A."/>
            <person name="Rokhsar D.S."/>
            <person name="Richardson P."/>
            <person name="Lucas S.M."/>
            <person name="Myers R.M."/>
            <person name="Rubin E.M."/>
        </authorList>
    </citation>
    <scope>NUCLEOTIDE SEQUENCE [LARGE SCALE GENOMIC DNA]</scope>
</reference>
<reference key="5">
    <citation type="journal article" date="2004" name="Genome Res.">
        <title>The status, quality, and expansion of the NIH full-length cDNA project: the Mammalian Gene Collection (MGC).</title>
        <authorList>
            <consortium name="The MGC Project Team"/>
        </authorList>
    </citation>
    <scope>NUCLEOTIDE SEQUENCE [LARGE SCALE MRNA] (ISOFORM 1)</scope>
    <source>
        <tissue>Testis</tissue>
    </source>
</reference>
<reference key="6">
    <citation type="journal article" date="1993" name="J. Biol. Chem.">
        <title>Purification, characterization, and cellular localization of the 100-kDa human placental GTPase-activating protein.</title>
        <authorList>
            <person name="Zhang Y."/>
            <person name="Zhang G."/>
            <person name="Mollat P."/>
            <person name="Carles C."/>
            <person name="Riva M."/>
            <person name="Frobert Y."/>
            <person name="Malassine A."/>
            <person name="Rostene W."/>
            <person name="Thang D.C."/>
            <person name="Beltchev B."/>
            <person name="Tavitian A."/>
            <person name="Thane M.N."/>
        </authorList>
    </citation>
    <scope>PROTEIN SEQUENCE OF 294-303; 326-334; 392-398; 439-457; 458-466; 479-483; 777-790 AND 821-825</scope>
    <scope>FUNCTION</scope>
    <scope>SUBCELLULAR LOCATION</scope>
    <scope>TISSUE SPECIFICITY</scope>
    <source>
        <tissue>Placenta</tissue>
    </source>
</reference>
<reference key="7">
    <citation type="journal article" date="1990" name="J. Biol. Chem.">
        <title>Purification, characterization, and western blot analysis of human GTPase-activating protein from native and recombinant sources.</title>
        <authorList>
            <person name="Halenbeck R."/>
            <person name="Crosier W.J."/>
            <person name="Clark R."/>
            <person name="McCormick F."/>
            <person name="Koths K."/>
        </authorList>
    </citation>
    <scope>PROTEIN SEQUENCE OF 1-7 (ISOFORM 2)</scope>
</reference>
<reference key="8">
    <citation type="journal article" date="2001" name="Eur. J. Biochem.">
        <title>Differential actions of p60c-Src and Lck kinases on the Ras regulators p120-GAP and GDP/GTP exchange factor CDC25Mm.</title>
        <authorList>
            <person name="Giglione C."/>
            <person name="Gonfloni S."/>
            <person name="Parmeggiani A."/>
        </authorList>
    </citation>
    <scope>PHOSPHORYLATION</scope>
    <scope>FUNCTION</scope>
</reference>
<reference key="9">
    <citation type="journal article" date="1992" name="Mol. Cell. Biol.">
        <title>GTPase-activating protein and phosphatidylinositol 3-kinase bind to distinct regions of the platelet-derived growth factor receptor beta subunit.</title>
        <authorList>
            <person name="Kazlauskas A."/>
            <person name="Kashishian A."/>
            <person name="Cooper J.A."/>
            <person name="Valius M."/>
        </authorList>
    </citation>
    <scope>INTERACTION WITH PDGFRB</scope>
</reference>
<reference key="10">
    <citation type="journal article" date="1995" name="Proc. Natl. Acad. Sci. U.S.A.">
        <title>Phosphotyrosine-independent binding of a 62-kDa protein to the src homology 2 (SH2) domain of p56lck and its regulation by phosphorylation of Ser-59 in the lck unique N-terminal region.</title>
        <authorList>
            <person name="Park I."/>
            <person name="Chung J."/>
            <person name="Walsh C.T."/>
            <person name="Yun Y."/>
            <person name="Strominger J.L."/>
            <person name="Shin J."/>
        </authorList>
    </citation>
    <scope>INTERACTION WITH SQSTM1</scope>
</reference>
<reference key="11">
    <citation type="journal article" date="2002" name="J. Biol. Chem.">
        <title>Src-induced phosphorylation of caveolin-2 on tyrosine 19. Phospho-caveolin-2 (Tyr(P)19) is localized near focal adhesions, remains associated with lipid rafts/caveolae, but no longer forms a high molecular mass hetero-oligomer with caveolin-1.</title>
        <authorList>
            <person name="Lee H."/>
            <person name="Park D.S."/>
            <person name="Wang X.B."/>
            <person name="Scherer P.E."/>
            <person name="Schwartz P.E."/>
            <person name="Lisanti M.P."/>
        </authorList>
    </citation>
    <scope>INTERACTION WITH CAV2</scope>
</reference>
<reference key="12">
    <citation type="journal article" date="2004" name="Biochemistry">
        <title>Tyrosine phosphorylation of caveolin-2 at residue 27: differences in the spatial and temporal behavior of phospho-Cav-2 (pY19 and pY27).</title>
        <authorList>
            <person name="Wang X.B."/>
            <person name="Lee H."/>
            <person name="Capozza F."/>
            <person name="Marmon S."/>
            <person name="Sotgia F."/>
            <person name="Brooks J.W."/>
            <person name="Campos-Gonzalez R."/>
            <person name="Lisanti M.P."/>
        </authorList>
    </citation>
    <scope>INTERACTION WITH CAV2</scope>
</reference>
<reference key="13">
    <citation type="journal article" date="2005" name="J. Biol. Chem.">
        <title>The SPRY domain-containing SOCS box protein 1 (SSB-1) interacts with MET and enhances the hepatocyte growth factor-induced Erk-Elk-1-serum response element pathway.</title>
        <authorList>
            <person name="Wang D."/>
            <person name="Li Z."/>
            <person name="Messing E.M."/>
            <person name="Wu G."/>
        </authorList>
    </citation>
    <scope>INTERACTION WITH SPSB1</scope>
</reference>
<reference key="14">
    <citation type="journal article" date="2005" name="Nat. Biotechnol.">
        <title>Immunoaffinity profiling of tyrosine phosphorylation in cancer cells.</title>
        <authorList>
            <person name="Rush J."/>
            <person name="Moritz A."/>
            <person name="Lee K.A."/>
            <person name="Guo A."/>
            <person name="Goss V.L."/>
            <person name="Spek E.J."/>
            <person name="Zhang H."/>
            <person name="Zha X.-M."/>
            <person name="Polakiewicz R.D."/>
            <person name="Comb M.J."/>
        </authorList>
    </citation>
    <scope>PHOSPHORYLATION [LARGE SCALE ANALYSIS] AT TYR-615</scope>
    <scope>IDENTIFICATION BY MASS SPECTROMETRY [LARGE SCALE ANALYSIS]</scope>
</reference>
<reference key="15">
    <citation type="journal article" date="2008" name="J. Biol. Chem.">
        <title>Regulation of 3-phosphoinositide-dependent protein kinase-1 (PDK1) by Src involves tyrosine phosphorylation of PDK1 and Src homology 2 domain binding.</title>
        <authorList>
            <person name="Yang K.J."/>
            <person name="Shin S."/>
            <person name="Piao L."/>
            <person name="Shin E."/>
            <person name="Li Y."/>
            <person name="Park K.A."/>
            <person name="Byun H.S."/>
            <person name="Won M."/>
            <person name="Hong J."/>
            <person name="Kweon G.R."/>
            <person name="Hur G.M."/>
            <person name="Seok J.H."/>
            <person name="Chun T."/>
            <person name="Brazil D.P."/>
            <person name="Hemmings B.A."/>
            <person name="Park J."/>
        </authorList>
    </citation>
    <scope>INTERACTION WITH PDPK1</scope>
</reference>
<reference key="16">
    <citation type="journal article" date="2011" name="BMC Syst. Biol.">
        <title>Initial characterization of the human central proteome.</title>
        <authorList>
            <person name="Burkard T.R."/>
            <person name="Planyavsky M."/>
            <person name="Kaupe I."/>
            <person name="Breitwieser F.P."/>
            <person name="Buerckstuemmer T."/>
            <person name="Bennett K.L."/>
            <person name="Superti-Furga G."/>
            <person name="Colinge J."/>
        </authorList>
    </citation>
    <scope>IDENTIFICATION BY MASS SPECTROMETRY [LARGE SCALE ANALYSIS]</scope>
</reference>
<reference key="17">
    <citation type="journal article" date="2011" name="Cell. Signal.">
        <title>Adaptor protein Nck1 interacts with p120 Ras GTPase-activating protein and regulates its activity.</title>
        <authorList>
            <person name="Ger M."/>
            <person name="Zitkus Z."/>
            <person name="Valius M."/>
        </authorList>
    </citation>
    <scope>INTERACTION WITH NCK1</scope>
</reference>
<reference key="18">
    <citation type="journal article" date="2012" name="Mol. Cell. Proteomics">
        <title>Comparative large-scale characterisation of plant vs. mammal proteins reveals similar and idiosyncratic N-alpha acetylation features.</title>
        <authorList>
            <person name="Bienvenut W.V."/>
            <person name="Sumpton D."/>
            <person name="Martinez A."/>
            <person name="Lilla S."/>
            <person name="Espagne C."/>
            <person name="Meinnel T."/>
            <person name="Giglione C."/>
        </authorList>
    </citation>
    <scope>ACETYLATION [LARGE SCALE ANALYSIS] AT MET-1</scope>
    <scope>IDENTIFICATION BY MASS SPECTROMETRY [LARGE SCALE ANALYSIS]</scope>
</reference>
<reference key="19">
    <citation type="journal article" date="2012" name="Proc. Natl. Acad. Sci. U.S.A.">
        <title>N-terminal acetylome analyses and functional insights of the N-terminal acetyltransferase NatB.</title>
        <authorList>
            <person name="Van Damme P."/>
            <person name="Lasa M."/>
            <person name="Polevoda B."/>
            <person name="Gazquez C."/>
            <person name="Elosegui-Artola A."/>
            <person name="Kim D.S."/>
            <person name="De Juan-Pardo E."/>
            <person name="Demeyer K."/>
            <person name="Hole K."/>
            <person name="Larrea E."/>
            <person name="Timmerman E."/>
            <person name="Prieto J."/>
            <person name="Arnesen T."/>
            <person name="Sherman F."/>
            <person name="Gevaert K."/>
            <person name="Aldabe R."/>
        </authorList>
    </citation>
    <scope>ACETYLATION [LARGE SCALE ANALYSIS] AT MET-1</scope>
    <scope>IDENTIFICATION BY MASS SPECTROMETRY [LARGE SCALE ANALYSIS]</scope>
</reference>
<reference key="20">
    <citation type="journal article" date="2013" name="J. Proteome Res.">
        <title>Toward a comprehensive characterization of a human cancer cell phosphoproteome.</title>
        <authorList>
            <person name="Zhou H."/>
            <person name="Di Palma S."/>
            <person name="Preisinger C."/>
            <person name="Peng M."/>
            <person name="Polat A.N."/>
            <person name="Heck A.J."/>
            <person name="Mohammed S."/>
        </authorList>
    </citation>
    <scope>PHOSPHORYLATION [LARGE SCALE ANALYSIS] AT SER-831</scope>
    <scope>IDENTIFICATION BY MASS SPECTROMETRY [LARGE SCALE ANALYSIS]</scope>
    <source>
        <tissue>Erythroleukemia</tissue>
    </source>
</reference>
<reference key="21">
    <citation type="journal article" date="2019" name="Neuron">
        <title>Mutations in chromatin modifier and ephrin signaling genes in vein of Galen malformation.</title>
        <authorList>
            <person name="Duran D."/>
            <person name="Zeng X."/>
            <person name="Jin S.C."/>
            <person name="Choi J."/>
            <person name="Nelson-Williams C."/>
            <person name="Yatsula B."/>
            <person name="Gaillard J."/>
            <person name="Furey C.G."/>
            <person name="Lu Q."/>
            <person name="Timberlake A.T."/>
            <person name="Dong W."/>
            <person name="Sorscher M.A."/>
            <person name="Loring E."/>
            <person name="Klein J."/>
            <person name="Allocco A."/>
            <person name="Hunt A."/>
            <person name="Conine S."/>
            <person name="Karimy J.K."/>
            <person name="Youngblood M.W."/>
            <person name="Zhang J."/>
            <person name="DiLuna M.L."/>
            <person name="Matouk C.C."/>
            <person name="Mane S."/>
            <person name="Tikhonova I.R."/>
            <person name="Castaldi C."/>
            <person name="Lopez-Giraldez F."/>
            <person name="Knight J."/>
            <person name="Haider S."/>
            <person name="Soban M."/>
            <person name="Alper S.L."/>
            <person name="Komiyama M."/>
            <person name="Ducruet A.F."/>
            <person name="Zabramski J.M."/>
            <person name="Dardik A."/>
            <person name="Walcott B.P."/>
            <person name="Stapleton C.J."/>
            <person name="Aagaard-Kienitz B."/>
            <person name="Rodesch G."/>
            <person name="Jackson E."/>
            <person name="Smith E.R."/>
            <person name="Orbach D.B."/>
            <person name="Berenstein A."/>
            <person name="Bilguvar K."/>
            <person name="Vikkula M."/>
            <person name="Gunel M."/>
            <person name="Lifton R.P."/>
            <person name="Kahle K.T."/>
        </authorList>
    </citation>
    <scope>INTERACTION WITH EPHB4</scope>
</reference>
<reference key="22">
    <citation type="journal article" date="1994" name="EMBO J.">
        <title>Solution structure of GAP SH3 domain by 1H NMR and spatial arrangement of essential Ras signaling-involved sequence.</title>
        <authorList>
            <person name="Yang Y.S."/>
            <person name="Garbay C."/>
            <person name="Duschesne M."/>
            <person name="Cornille F."/>
            <person name="Jullian N."/>
            <person name="Fromage N."/>
            <person name="Tocque B."/>
            <person name="Roques B.P."/>
        </authorList>
    </citation>
    <scope>STRUCTURE BY NMR OF 275-350</scope>
</reference>
<reference key="23">
    <citation type="journal article" date="1996" name="Nature">
        <title>Crystal structure of the GTPase-activating domain of human p120GAP and implications for the interaction with Ras.</title>
        <authorList>
            <person name="Scheffzek K."/>
            <person name="Lautwein A."/>
            <person name="Kabsch W."/>
            <person name="Reza Ahmadian M."/>
            <person name="Wittinghofer A."/>
        </authorList>
    </citation>
    <scope>X-RAY CRYSTALLOGRAPHY (1.6 ANGSTROMS) OF 714-1047</scope>
</reference>
<reference key="24">
    <citation type="journal article" date="1997" name="Science">
        <title>The Ras-RasGAP complex: structural basis for GTPase activation and its loss in oncogenic Ras mutants.</title>
        <authorList>
            <person name="Scheffzek K."/>
            <person name="Ahmadian M.R."/>
            <person name="Kabsch W."/>
            <person name="Wiesmuller L."/>
            <person name="Lautwein A."/>
            <person name="Schmitz F."/>
            <person name="Wittinghofer A."/>
        </authorList>
    </citation>
    <scope>X-RAY CRYSTALLOGRAPHY (2.5 ANGSTROMS) OF 714-1047 IN COMPLEX WITH RAS</scope>
</reference>
<reference key="25">
    <citation type="submission" date="2007-05" db="PDB data bank">
        <title>Solution structure of the SH3 domain and of the second SH2 domain of human RAS GTPase-activating protein 1.</title>
        <authorList>
            <consortium name="RIKEN structural genomics initiative (RSGI)"/>
        </authorList>
    </citation>
    <scope>STRUCTURE BY NMR OF 282-446</scope>
</reference>
<reference key="26">
    <citation type="journal article" date="1993" name="Nat. Genet.">
        <title>Nonsense mutations in the C-terminal SH2 region of the GTPase activating protein (GAP) gene in human tumours.</title>
        <authorList>
            <person name="Friedman E."/>
            <person name="Gejman P.V."/>
            <person name="Martin G.A."/>
            <person name="McCormick F."/>
        </authorList>
    </citation>
    <scope>VARIANTS LEU-398; GLU-400 AND VAL-401</scope>
</reference>
<reference key="27">
    <citation type="journal article" date="2003" name="Am. J. Hum. Genet.">
        <title>Capillary malformation-arteriovenous malformation, a new clinical and genetic disorder caused by RASA1 mutations.</title>
        <authorList>
            <person name="Eerola I."/>
            <person name="Boon L.M."/>
            <person name="Mulliken J.B."/>
            <person name="Burrows P.E."/>
            <person name="Dompmartin A."/>
            <person name="Watanabe S."/>
            <person name="Vanwijck R."/>
            <person name="Vikkula M."/>
        </authorList>
    </citation>
    <scope>VARIANT CMAVM1 TYR-540</scope>
</reference>
<reference key="28">
    <citation type="journal article" date="2013" name="Hum. Mutat.">
        <title>RASA1 mutations and associated phenotypes in 68 families with capillary malformation-arteriovenous malformation.</title>
        <authorList>
            <person name="Revencu N."/>
            <person name="Boon L.M."/>
            <person name="Mendola A."/>
            <person name="Cordisco M.R."/>
            <person name="Dubois J."/>
            <person name="Clapuyt P."/>
            <person name="Hammer F."/>
            <person name="Amor D.J."/>
            <person name="Irvine A.D."/>
            <person name="Baselga E."/>
            <person name="Dompmartin A."/>
            <person name="Syed S."/>
            <person name="Martin-Santiago A."/>
            <person name="Ades L."/>
            <person name="Collins F."/>
            <person name="Smith J."/>
            <person name="Sandaradura S."/>
            <person name="Barrio V.R."/>
            <person name="Burrows P.E."/>
            <person name="Blei F."/>
            <person name="Cozzolino M."/>
            <person name="Brunetti-Pierri N."/>
            <person name="Vicente A."/>
            <person name="Abramowicz M."/>
            <person name="Desir J."/>
            <person name="Vilain C."/>
            <person name="Chung W.K."/>
            <person name="Wilson A."/>
            <person name="Gardiner C.A."/>
            <person name="Dwight Y."/>
            <person name="Lord D.J."/>
            <person name="Fishman L."/>
            <person name="Cytrynbaum C."/>
            <person name="Chamlin S."/>
            <person name="Ghali F."/>
            <person name="Gilaberte Y."/>
            <person name="Joss S."/>
            <person name="Boente Mdel C."/>
            <person name="Leaute-Labreze C."/>
            <person name="Delrue M.A."/>
            <person name="Bayliss S."/>
            <person name="Martorell L."/>
            <person name="Gonzalez-Ensenat M.A."/>
            <person name="Mazereeuw-Hautier J."/>
            <person name="O'Donnell B."/>
            <person name="Bessis D."/>
            <person name="Pyeritz R.E."/>
            <person name="Salhi A."/>
            <person name="Tan O.T."/>
            <person name="Wargon O."/>
            <person name="Mulliken J.B."/>
            <person name="Vikkula M."/>
        </authorList>
    </citation>
    <scope>VARIANTS CMAVM1 CYS-528; ASP-530; GLU-626 AND VAL-763</scope>
</reference>